<protein>
    <recommendedName>
        <fullName>Ferredoxin-thioredoxin reductase, catalytic chain</fullName>
        <shortName>FTR-C</shortName>
        <ecNumber>1.8.7.2</ecNumber>
    </recommendedName>
    <alternativeName>
        <fullName>Ferredoxin-thioredoxin reductase subunit B</fullName>
        <shortName>FTR-B</shortName>
    </alternativeName>
</protein>
<accession>O78461</accession>
<comment type="function">
    <text evidence="1">Catalytic subunit of the ferredoxin-thioredoxin reductase (FTR), which catalyzes the two-electron reduction of thioredoxins by the electrons provided by reduced ferredoxin.</text>
</comment>
<comment type="catalytic activity">
    <reaction>
        <text>[thioredoxin]-disulfide + 2 reduced [2Fe-2S]-[ferredoxin] + 2 H(+) = [thioredoxin]-dithiol + 2 oxidized [2Fe-2S]-[ferredoxin]</text>
        <dbReference type="Rhea" id="RHEA:42336"/>
        <dbReference type="Rhea" id="RHEA-COMP:10000"/>
        <dbReference type="Rhea" id="RHEA-COMP:10001"/>
        <dbReference type="Rhea" id="RHEA-COMP:10698"/>
        <dbReference type="Rhea" id="RHEA-COMP:10700"/>
        <dbReference type="ChEBI" id="CHEBI:15378"/>
        <dbReference type="ChEBI" id="CHEBI:29950"/>
        <dbReference type="ChEBI" id="CHEBI:33737"/>
        <dbReference type="ChEBI" id="CHEBI:33738"/>
        <dbReference type="ChEBI" id="CHEBI:50058"/>
        <dbReference type="EC" id="1.8.7.2"/>
    </reaction>
</comment>
<comment type="cofactor">
    <cofactor evidence="1">
        <name>[4Fe-4S] cluster</name>
        <dbReference type="ChEBI" id="CHEBI:49883"/>
    </cofactor>
    <text evidence="1">Binds 1 [4Fe-4S] cluster.</text>
</comment>
<comment type="subunit">
    <text evidence="1">Heterodimer of subunit A (variable subunit) and subunit B (catalytic subunit). Heterodimeric FTR forms a complex with ferredoxin and thioredoxin (By similarity).</text>
</comment>
<comment type="subcellular location">
    <subcellularLocation>
        <location>Plastid</location>
        <location>Chloroplast</location>
    </subcellularLocation>
</comment>
<comment type="similarity">
    <text evidence="2">Belongs to the ferredoxin thioredoxin reductase beta subunit family.</text>
</comment>
<evidence type="ECO:0000250" key="1"/>
<evidence type="ECO:0000305" key="2"/>
<dbReference type="EC" id="1.8.7.2"/>
<dbReference type="EMBL" id="AF041468">
    <property type="protein sequence ID" value="AAC35652.1"/>
    <property type="molecule type" value="Genomic_DNA"/>
</dbReference>
<dbReference type="RefSeq" id="NP_050718.1">
    <property type="nucleotide sequence ID" value="NC_000926.1"/>
</dbReference>
<dbReference type="SMR" id="O78461"/>
<dbReference type="GeneID" id="857021"/>
<dbReference type="HOGENOM" id="CLU_108772_0_0_1"/>
<dbReference type="OMA" id="YCHCLLF"/>
<dbReference type="GO" id="GO:0009507">
    <property type="term" value="C:chloroplast"/>
    <property type="evidence" value="ECO:0007669"/>
    <property type="project" value="UniProtKB-SubCell"/>
</dbReference>
<dbReference type="GO" id="GO:0051539">
    <property type="term" value="F:4 iron, 4 sulfur cluster binding"/>
    <property type="evidence" value="ECO:0000250"/>
    <property type="project" value="UniProtKB"/>
</dbReference>
<dbReference type="GO" id="GO:0009055">
    <property type="term" value="F:electron transfer activity"/>
    <property type="evidence" value="ECO:0000250"/>
    <property type="project" value="UniProtKB"/>
</dbReference>
<dbReference type="GO" id="GO:0046872">
    <property type="term" value="F:metal ion binding"/>
    <property type="evidence" value="ECO:0007669"/>
    <property type="project" value="UniProtKB-KW"/>
</dbReference>
<dbReference type="GO" id="GO:0016730">
    <property type="term" value="F:oxidoreductase activity, acting on iron-sulfur proteins as donors"/>
    <property type="evidence" value="ECO:0007669"/>
    <property type="project" value="InterPro"/>
</dbReference>
<dbReference type="FunFam" id="3.90.460.10:FF:000001">
    <property type="entry name" value="Ferredoxin-thioredoxin reductase, catalytic chain"/>
    <property type="match status" value="1"/>
</dbReference>
<dbReference type="Gene3D" id="3.90.460.10">
    <property type="entry name" value="Ferredoxin thioredoxin reductase catalytic beta subunit"/>
    <property type="match status" value="1"/>
</dbReference>
<dbReference type="InterPro" id="IPR004209">
    <property type="entry name" value="FTR_bsu"/>
</dbReference>
<dbReference type="InterPro" id="IPR024707">
    <property type="entry name" value="FTR_bsu_Cyanobacter"/>
</dbReference>
<dbReference type="InterPro" id="IPR036644">
    <property type="entry name" value="FTR_bsu_sf"/>
</dbReference>
<dbReference type="PANTHER" id="PTHR35113">
    <property type="entry name" value="FERREDOXIN-THIOREDOXIN REDUCTASE CATALYTIC CHAIN, CHLOROPLASTIC"/>
    <property type="match status" value="1"/>
</dbReference>
<dbReference type="PANTHER" id="PTHR35113:SF1">
    <property type="entry name" value="FERREDOXIN-THIOREDOXIN REDUCTASE CATALYTIC CHAIN, CHLOROPLASTIC"/>
    <property type="match status" value="1"/>
</dbReference>
<dbReference type="Pfam" id="PF02943">
    <property type="entry name" value="FeThRed_B"/>
    <property type="match status" value="1"/>
</dbReference>
<dbReference type="PIRSF" id="PIRSF000260">
    <property type="entry name" value="FTRc"/>
    <property type="match status" value="1"/>
</dbReference>
<dbReference type="SUPFAM" id="SSF57662">
    <property type="entry name" value="Ferredoxin thioredoxin reductase (FTR), catalytic beta chain"/>
    <property type="match status" value="1"/>
</dbReference>
<sequence>MIESYSDSFVAMKKFAETYAKRTNTFFCNDLSITQIVLEGLAKHKDEYGAPLCPCRHYDDKSEEVASTYWNCPCVPMRERKECHCMLFLTKDNEFAGSSQTL</sequence>
<geneLocation type="chloroplast"/>
<reference key="1">
    <citation type="journal article" date="1999" name="J. Mol. Evol.">
        <title>The plastid genome of the cryptophyte alga, Guillardia theta: complete sequence and conserved synteny groups confirm its common ancestry with red algae.</title>
        <authorList>
            <person name="Douglas S.E."/>
            <person name="Penny S.L."/>
        </authorList>
    </citation>
    <scope>NUCLEOTIDE SEQUENCE [LARGE SCALE GENOMIC DNA]</scope>
</reference>
<keyword id="KW-0004">4Fe-4S</keyword>
<keyword id="KW-0150">Chloroplast</keyword>
<keyword id="KW-1015">Disulfide bond</keyword>
<keyword id="KW-0408">Iron</keyword>
<keyword id="KW-0411">Iron-sulfur</keyword>
<keyword id="KW-0479">Metal-binding</keyword>
<keyword id="KW-0560">Oxidoreductase</keyword>
<keyword id="KW-0934">Plastid</keyword>
<keyword id="KW-0676">Redox-active center</keyword>
<feature type="chain" id="PRO_0000167672" description="Ferredoxin-thioredoxin reductase, catalytic chain">
    <location>
        <begin position="1"/>
        <end position="102"/>
    </location>
</feature>
<feature type="active site" description="Nucleophile" evidence="1">
    <location>
        <position position="55"/>
    </location>
</feature>
<feature type="binding site" evidence="1">
    <location>
        <position position="53"/>
    </location>
    <ligand>
        <name>[4Fe-4S] cluster</name>
        <dbReference type="ChEBI" id="CHEBI:49883"/>
    </ligand>
</feature>
<feature type="binding site" evidence="1">
    <location>
        <position position="72"/>
    </location>
    <ligand>
        <name>[4Fe-4S] cluster</name>
        <dbReference type="ChEBI" id="CHEBI:49883"/>
    </ligand>
</feature>
<feature type="binding site" evidence="1">
    <location>
        <position position="74"/>
    </location>
    <ligand>
        <name>[4Fe-4S] cluster</name>
        <dbReference type="ChEBI" id="CHEBI:49883"/>
    </ligand>
</feature>
<feature type="binding site" evidence="1">
    <location>
        <position position="83"/>
    </location>
    <ligand>
        <name>[4Fe-4S] cluster</name>
        <dbReference type="ChEBI" id="CHEBI:49883"/>
    </ligand>
</feature>
<feature type="site" description="Increases the nucleophilicity of the active site Cys" evidence="1">
    <location>
        <position position="84"/>
    </location>
</feature>
<feature type="disulfide bond" description="Redox-active" evidence="1">
    <location>
        <begin position="55"/>
        <end position="85"/>
    </location>
</feature>
<proteinExistence type="inferred from homology"/>
<gene>
    <name type="primary">ftrB</name>
</gene>
<organism>
    <name type="scientific">Guillardia theta</name>
    <name type="common">Cryptophyte</name>
    <name type="synonym">Cryptomonas phi</name>
    <dbReference type="NCBI Taxonomy" id="55529"/>
    <lineage>
        <taxon>Eukaryota</taxon>
        <taxon>Cryptophyceae</taxon>
        <taxon>Pyrenomonadales</taxon>
        <taxon>Geminigeraceae</taxon>
        <taxon>Guillardia</taxon>
    </lineage>
</organism>
<name>FTRC_GUITH</name>